<feature type="chain" id="PRO_0000060380" description="tRNA (guanine-N(1)-)-methyltransferase">
    <location>
        <begin position="1"/>
        <end position="244"/>
    </location>
</feature>
<feature type="binding site" evidence="1">
    <location>
        <position position="112"/>
    </location>
    <ligand>
        <name>S-adenosyl-L-methionine</name>
        <dbReference type="ChEBI" id="CHEBI:59789"/>
    </ligand>
</feature>
<feature type="binding site" evidence="1">
    <location>
        <begin position="132"/>
        <end position="137"/>
    </location>
    <ligand>
        <name>S-adenosyl-L-methionine</name>
        <dbReference type="ChEBI" id="CHEBI:59789"/>
    </ligand>
</feature>
<keyword id="KW-0963">Cytoplasm</keyword>
<keyword id="KW-0489">Methyltransferase</keyword>
<keyword id="KW-1185">Reference proteome</keyword>
<keyword id="KW-0949">S-adenosyl-L-methionine</keyword>
<keyword id="KW-0808">Transferase</keyword>
<keyword id="KW-0819">tRNA processing</keyword>
<comment type="function">
    <text evidence="1">Specifically methylates guanosine-37 in various tRNAs.</text>
</comment>
<comment type="catalytic activity">
    <reaction evidence="1">
        <text>guanosine(37) in tRNA + S-adenosyl-L-methionine = N(1)-methylguanosine(37) in tRNA + S-adenosyl-L-homocysteine + H(+)</text>
        <dbReference type="Rhea" id="RHEA:36899"/>
        <dbReference type="Rhea" id="RHEA-COMP:10145"/>
        <dbReference type="Rhea" id="RHEA-COMP:10147"/>
        <dbReference type="ChEBI" id="CHEBI:15378"/>
        <dbReference type="ChEBI" id="CHEBI:57856"/>
        <dbReference type="ChEBI" id="CHEBI:59789"/>
        <dbReference type="ChEBI" id="CHEBI:73542"/>
        <dbReference type="ChEBI" id="CHEBI:74269"/>
        <dbReference type="EC" id="2.1.1.228"/>
    </reaction>
</comment>
<comment type="subunit">
    <text evidence="1">Homodimer.</text>
</comment>
<comment type="subcellular location">
    <subcellularLocation>
        <location evidence="1">Cytoplasm</location>
    </subcellularLocation>
</comment>
<comment type="similarity">
    <text evidence="1">Belongs to the RNA methyltransferase TrmD family.</text>
</comment>
<evidence type="ECO:0000255" key="1">
    <source>
        <dbReference type="HAMAP-Rule" id="MF_00605"/>
    </source>
</evidence>
<sequence length="244" mass="27642">MRIDILTLFPGMFSGVLSESILKKAQEKGAVDIRLIDFREFADNKHKTVDDYPYGGGAGMVLKPQPIFDAVEHVTAGSPGARIILLCPQGERYTQKKAEELAKETHLVLICGHYEGYDERIRQYLATDEISIGDYILTGGELGAMVIVDSVVRLLPGVLGNEASPVDDSFSSGLLEYPQYTRPADFRGMKVPDILLSGNHQLIAEWREKESLRRTFLRRPDLLDEYPLTDKQKQWLKEWEKERE</sequence>
<organism>
    <name type="scientific">Geobacillus kaustophilus (strain HTA426)</name>
    <dbReference type="NCBI Taxonomy" id="235909"/>
    <lineage>
        <taxon>Bacteria</taxon>
        <taxon>Bacillati</taxon>
        <taxon>Bacillota</taxon>
        <taxon>Bacilli</taxon>
        <taxon>Bacillales</taxon>
        <taxon>Anoxybacillaceae</taxon>
        <taxon>Geobacillus</taxon>
        <taxon>Geobacillus thermoleovorans group</taxon>
    </lineage>
</organism>
<proteinExistence type="inferred from homology"/>
<gene>
    <name evidence="1" type="primary">trmD</name>
    <name type="ordered locus">GK1201</name>
</gene>
<reference key="1">
    <citation type="journal article" date="2004" name="Nucleic Acids Res.">
        <title>Thermoadaptation trait revealed by the genome sequence of thermophilic Geobacillus kaustophilus.</title>
        <authorList>
            <person name="Takami H."/>
            <person name="Takaki Y."/>
            <person name="Chee G.-J."/>
            <person name="Nishi S."/>
            <person name="Shimamura S."/>
            <person name="Suzuki H."/>
            <person name="Matsui S."/>
            <person name="Uchiyama I."/>
        </authorList>
    </citation>
    <scope>NUCLEOTIDE SEQUENCE [LARGE SCALE GENOMIC DNA]</scope>
    <source>
        <strain>HTA426</strain>
    </source>
</reference>
<accession>Q5L0P4</accession>
<protein>
    <recommendedName>
        <fullName evidence="1">tRNA (guanine-N(1)-)-methyltransferase</fullName>
        <ecNumber evidence="1">2.1.1.228</ecNumber>
    </recommendedName>
    <alternativeName>
        <fullName evidence="1">M1G-methyltransferase</fullName>
    </alternativeName>
    <alternativeName>
        <fullName evidence="1">tRNA [GM37] methyltransferase</fullName>
    </alternativeName>
</protein>
<dbReference type="EC" id="2.1.1.228" evidence="1"/>
<dbReference type="EMBL" id="BA000043">
    <property type="protein sequence ID" value="BAD75486.1"/>
    <property type="molecule type" value="Genomic_DNA"/>
</dbReference>
<dbReference type="RefSeq" id="WP_011230701.1">
    <property type="nucleotide sequence ID" value="NC_006510.1"/>
</dbReference>
<dbReference type="SMR" id="Q5L0P4"/>
<dbReference type="STRING" id="235909.GK1201"/>
<dbReference type="GeneID" id="32063095"/>
<dbReference type="KEGG" id="gka:GK1201"/>
<dbReference type="eggNOG" id="COG0336">
    <property type="taxonomic scope" value="Bacteria"/>
</dbReference>
<dbReference type="HOGENOM" id="CLU_047363_0_1_9"/>
<dbReference type="Proteomes" id="UP000001172">
    <property type="component" value="Chromosome"/>
</dbReference>
<dbReference type="GO" id="GO:0005829">
    <property type="term" value="C:cytosol"/>
    <property type="evidence" value="ECO:0007669"/>
    <property type="project" value="TreeGrafter"/>
</dbReference>
<dbReference type="GO" id="GO:0052906">
    <property type="term" value="F:tRNA (guanine(37)-N1)-methyltransferase activity"/>
    <property type="evidence" value="ECO:0007669"/>
    <property type="project" value="UniProtKB-UniRule"/>
</dbReference>
<dbReference type="GO" id="GO:0002939">
    <property type="term" value="P:tRNA N1-guanine methylation"/>
    <property type="evidence" value="ECO:0007669"/>
    <property type="project" value="TreeGrafter"/>
</dbReference>
<dbReference type="CDD" id="cd18080">
    <property type="entry name" value="TrmD-like"/>
    <property type="match status" value="1"/>
</dbReference>
<dbReference type="FunFam" id="1.10.1270.20:FF:000001">
    <property type="entry name" value="tRNA (guanine-N(1)-)-methyltransferase"/>
    <property type="match status" value="1"/>
</dbReference>
<dbReference type="FunFam" id="3.40.1280.10:FF:000001">
    <property type="entry name" value="tRNA (guanine-N(1)-)-methyltransferase"/>
    <property type="match status" value="1"/>
</dbReference>
<dbReference type="Gene3D" id="3.40.1280.10">
    <property type="match status" value="1"/>
</dbReference>
<dbReference type="Gene3D" id="1.10.1270.20">
    <property type="entry name" value="tRNA(m1g37)methyltransferase, domain 2"/>
    <property type="match status" value="1"/>
</dbReference>
<dbReference type="HAMAP" id="MF_00605">
    <property type="entry name" value="TrmD"/>
    <property type="match status" value="1"/>
</dbReference>
<dbReference type="InterPro" id="IPR029028">
    <property type="entry name" value="Alpha/beta_knot_MTases"/>
</dbReference>
<dbReference type="InterPro" id="IPR023148">
    <property type="entry name" value="tRNA_m1G_MeTrfase_C_sf"/>
</dbReference>
<dbReference type="InterPro" id="IPR002649">
    <property type="entry name" value="tRNA_m1G_MeTrfase_TrmD"/>
</dbReference>
<dbReference type="InterPro" id="IPR029026">
    <property type="entry name" value="tRNA_m1G_MTases_N"/>
</dbReference>
<dbReference type="InterPro" id="IPR016009">
    <property type="entry name" value="tRNA_MeTrfase_TRMD/TRM10"/>
</dbReference>
<dbReference type="NCBIfam" id="NF000648">
    <property type="entry name" value="PRK00026.1"/>
    <property type="match status" value="1"/>
</dbReference>
<dbReference type="NCBIfam" id="TIGR00088">
    <property type="entry name" value="trmD"/>
    <property type="match status" value="1"/>
</dbReference>
<dbReference type="PANTHER" id="PTHR46417">
    <property type="entry name" value="TRNA (GUANINE-N(1)-)-METHYLTRANSFERASE"/>
    <property type="match status" value="1"/>
</dbReference>
<dbReference type="PANTHER" id="PTHR46417:SF1">
    <property type="entry name" value="TRNA (GUANINE-N(1)-)-METHYLTRANSFERASE"/>
    <property type="match status" value="1"/>
</dbReference>
<dbReference type="Pfam" id="PF01746">
    <property type="entry name" value="tRNA_m1G_MT"/>
    <property type="match status" value="1"/>
</dbReference>
<dbReference type="PIRSF" id="PIRSF000386">
    <property type="entry name" value="tRNA_mtase"/>
    <property type="match status" value="1"/>
</dbReference>
<dbReference type="SUPFAM" id="SSF75217">
    <property type="entry name" value="alpha/beta knot"/>
    <property type="match status" value="1"/>
</dbReference>
<name>TRMD_GEOKA</name>